<gene>
    <name type="ORF">DDB_G0286447</name>
</gene>
<feature type="chain" id="PRO_0000389558" description="Uncharacterized protein DDB_G0286447">
    <location>
        <begin position="1"/>
        <end position="521"/>
    </location>
</feature>
<feature type="region of interest" description="Disordered" evidence="2">
    <location>
        <begin position="238"/>
        <end position="357"/>
    </location>
</feature>
<feature type="region of interest" description="Disordered" evidence="2">
    <location>
        <begin position="413"/>
        <end position="491"/>
    </location>
</feature>
<feature type="coiled-coil region" evidence="1">
    <location>
        <begin position="14"/>
        <end position="41"/>
    </location>
</feature>
<feature type="compositionally biased region" description="Low complexity" evidence="2">
    <location>
        <begin position="238"/>
        <end position="266"/>
    </location>
</feature>
<feature type="compositionally biased region" description="Low complexity" evidence="2">
    <location>
        <begin position="275"/>
        <end position="353"/>
    </location>
</feature>
<feature type="compositionally biased region" description="Low complexity" evidence="2">
    <location>
        <begin position="423"/>
        <end position="482"/>
    </location>
</feature>
<reference key="1">
    <citation type="journal article" date="2005" name="Nature">
        <title>The genome of the social amoeba Dictyostelium discoideum.</title>
        <authorList>
            <person name="Eichinger L."/>
            <person name="Pachebat J.A."/>
            <person name="Gloeckner G."/>
            <person name="Rajandream M.A."/>
            <person name="Sucgang R."/>
            <person name="Berriman M."/>
            <person name="Song J."/>
            <person name="Olsen R."/>
            <person name="Szafranski K."/>
            <person name="Xu Q."/>
            <person name="Tunggal B."/>
            <person name="Kummerfeld S."/>
            <person name="Madera M."/>
            <person name="Konfortov B.A."/>
            <person name="Rivero F."/>
            <person name="Bankier A.T."/>
            <person name="Lehmann R."/>
            <person name="Hamlin N."/>
            <person name="Davies R."/>
            <person name="Gaudet P."/>
            <person name="Fey P."/>
            <person name="Pilcher K."/>
            <person name="Chen G."/>
            <person name="Saunders D."/>
            <person name="Sodergren E.J."/>
            <person name="Davis P."/>
            <person name="Kerhornou A."/>
            <person name="Nie X."/>
            <person name="Hall N."/>
            <person name="Anjard C."/>
            <person name="Hemphill L."/>
            <person name="Bason N."/>
            <person name="Farbrother P."/>
            <person name="Desany B."/>
            <person name="Just E."/>
            <person name="Morio T."/>
            <person name="Rost R."/>
            <person name="Churcher C.M."/>
            <person name="Cooper J."/>
            <person name="Haydock S."/>
            <person name="van Driessche N."/>
            <person name="Cronin A."/>
            <person name="Goodhead I."/>
            <person name="Muzny D.M."/>
            <person name="Mourier T."/>
            <person name="Pain A."/>
            <person name="Lu M."/>
            <person name="Harper D."/>
            <person name="Lindsay R."/>
            <person name="Hauser H."/>
            <person name="James K.D."/>
            <person name="Quiles M."/>
            <person name="Madan Babu M."/>
            <person name="Saito T."/>
            <person name="Buchrieser C."/>
            <person name="Wardroper A."/>
            <person name="Felder M."/>
            <person name="Thangavelu M."/>
            <person name="Johnson D."/>
            <person name="Knights A."/>
            <person name="Loulseged H."/>
            <person name="Mungall K.L."/>
            <person name="Oliver K."/>
            <person name="Price C."/>
            <person name="Quail M.A."/>
            <person name="Urushihara H."/>
            <person name="Hernandez J."/>
            <person name="Rabbinowitsch E."/>
            <person name="Steffen D."/>
            <person name="Sanders M."/>
            <person name="Ma J."/>
            <person name="Kohara Y."/>
            <person name="Sharp S."/>
            <person name="Simmonds M.N."/>
            <person name="Spiegler S."/>
            <person name="Tivey A."/>
            <person name="Sugano S."/>
            <person name="White B."/>
            <person name="Walker D."/>
            <person name="Woodward J.R."/>
            <person name="Winckler T."/>
            <person name="Tanaka Y."/>
            <person name="Shaulsky G."/>
            <person name="Schleicher M."/>
            <person name="Weinstock G.M."/>
            <person name="Rosenthal A."/>
            <person name="Cox E.C."/>
            <person name="Chisholm R.L."/>
            <person name="Gibbs R.A."/>
            <person name="Loomis W.F."/>
            <person name="Platzer M."/>
            <person name="Kay R.R."/>
            <person name="Williams J.G."/>
            <person name="Dear P.H."/>
            <person name="Noegel A.A."/>
            <person name="Barrell B.G."/>
            <person name="Kuspa A."/>
        </authorList>
    </citation>
    <scope>NUCLEOTIDE SEQUENCE [LARGE SCALE GENOMIC DNA]</scope>
    <source>
        <strain>AX4</strain>
    </source>
</reference>
<dbReference type="EMBL" id="AAFI02000085">
    <property type="protein sequence ID" value="EAL64248.1"/>
    <property type="molecule type" value="Genomic_DNA"/>
</dbReference>
<dbReference type="RefSeq" id="XP_637767.1">
    <property type="nucleotide sequence ID" value="XM_632675.1"/>
</dbReference>
<dbReference type="SMR" id="Q54LR3"/>
<dbReference type="FunCoup" id="Q54LR3">
    <property type="interactions" value="289"/>
</dbReference>
<dbReference type="PaxDb" id="44689-DDB0304464"/>
<dbReference type="EnsemblProtists" id="EAL64248">
    <property type="protein sequence ID" value="EAL64248"/>
    <property type="gene ID" value="DDB_G0286447"/>
</dbReference>
<dbReference type="GeneID" id="8625632"/>
<dbReference type="KEGG" id="ddi:DDB_G0286447"/>
<dbReference type="dictyBase" id="DDB_G0286447"/>
<dbReference type="VEuPathDB" id="AmoebaDB:DDB_G0286447"/>
<dbReference type="eggNOG" id="ENOG502T06R">
    <property type="taxonomic scope" value="Eukaryota"/>
</dbReference>
<dbReference type="HOGENOM" id="CLU_523216_0_0_1"/>
<dbReference type="InParanoid" id="Q54LR3"/>
<dbReference type="OMA" id="NSPFNVQ"/>
<dbReference type="PRO" id="PR:Q54LR3"/>
<dbReference type="Proteomes" id="UP000002195">
    <property type="component" value="Chromosome 4"/>
</dbReference>
<dbReference type="GO" id="GO:0005634">
    <property type="term" value="C:nucleus"/>
    <property type="evidence" value="ECO:0000250"/>
    <property type="project" value="dictyBase"/>
</dbReference>
<dbReference type="GO" id="GO:0043565">
    <property type="term" value="F:sequence-specific DNA binding"/>
    <property type="evidence" value="ECO:0000250"/>
    <property type="project" value="dictyBase"/>
</dbReference>
<dbReference type="InterPro" id="IPR040430">
    <property type="entry name" value="CudA-like"/>
</dbReference>
<dbReference type="PANTHER" id="PTHR38092">
    <property type="entry name" value="REGULATOR CUDA, PUTATIVE-RELATED"/>
    <property type="match status" value="1"/>
</dbReference>
<dbReference type="PANTHER" id="PTHR38092:SF1">
    <property type="entry name" value="TRANSCRIPTIONAL REGULATOR CUDA-RELATED"/>
    <property type="match status" value="1"/>
</dbReference>
<dbReference type="SUPFAM" id="SSF81995">
    <property type="entry name" value="beta-sandwich domain of Sec23/24"/>
    <property type="match status" value="1"/>
</dbReference>
<sequence>MINNFDQQIQYIPQFQQMQHQMQQQQQQQMQQQQQQQQQQQPQQMQIQLSTHEERLELASQSSPFEEKVTLNGLQKNIKVVIKNSPFNVQLRLKKANEIDLNCVAFESTLLYDCDTNEEKEVDFVKVKPVEHKASPNETGELVNIELRIKVLTSQHEDMFFRVKIEGQDPISKEPIKGLYALTHSIKVISKPEQLKKKQPPKKRTWNDILLESVSKIQHQQHEQQKLIEKLLQQQAGLSGSTSTTNNNNTTTTTTTTSSNNITSSSAINLPSPPSSTSSSPSSSPSSSPTLVNSHLLTSTLNNTSSNNLNSSSNTLNNNNNNNNNNSNTSTSNNNNCNINNNNNNNNNNNNNNISGFEDSFKQMMNAYTQLDPRQRAEKVRRVFRNASSRDSETLSELLDLFITEGVGGQLGTAVAPLPNSPPRLSNSSTQIQNSNNNNNNNNNNNNNNNNNNNNSNNNNSTNNNNNNNNNNNNNSTIPNNPFMSSHSNNGDPYPFFSNNSFDNDSFNSFGGSSNSEFIPF</sequence>
<keyword id="KW-0175">Coiled coil</keyword>
<keyword id="KW-1185">Reference proteome</keyword>
<name>Y6447_DICDI</name>
<accession>Q54LR3</accession>
<protein>
    <recommendedName>
        <fullName>Uncharacterized protein DDB_G0286447</fullName>
    </recommendedName>
</protein>
<evidence type="ECO:0000255" key="1"/>
<evidence type="ECO:0000256" key="2">
    <source>
        <dbReference type="SAM" id="MobiDB-lite"/>
    </source>
</evidence>
<proteinExistence type="predicted"/>
<organism>
    <name type="scientific">Dictyostelium discoideum</name>
    <name type="common">Social amoeba</name>
    <dbReference type="NCBI Taxonomy" id="44689"/>
    <lineage>
        <taxon>Eukaryota</taxon>
        <taxon>Amoebozoa</taxon>
        <taxon>Evosea</taxon>
        <taxon>Eumycetozoa</taxon>
        <taxon>Dictyostelia</taxon>
        <taxon>Dictyosteliales</taxon>
        <taxon>Dictyosteliaceae</taxon>
        <taxon>Dictyostelium</taxon>
    </lineage>
</organism>